<gene>
    <name type="primary">OSH15</name>
    <name type="synonym">HOS3</name>
    <name type="ordered locus">Os07g0129700</name>
    <name type="ordered locus">LOC_Os07g03770</name>
    <name type="ORF">OSJNBa0088O14.22</name>
    <name type="ORF">P0483E09.2</name>
</gene>
<reference key="1">
    <citation type="journal article" date="1998" name="Plant Mol. Biol.">
        <title>Isolation and characterization of a rice homeobox gene, OSH15.</title>
        <authorList>
            <person name="Sato Y."/>
            <person name="Sentoku N."/>
            <person name="Nagato Y."/>
            <person name="Matsuoka M."/>
        </authorList>
    </citation>
    <scope>NUCLEOTIDE SEQUENCE [MRNA]</scope>
    <scope>FUNCTION</scope>
    <scope>TISSUE SPECIFICITY</scope>
    <scope>DEVELOPMENTAL STAGE</scope>
    <source>
        <strain>cv. Nipponbare</strain>
        <tissue>Shoot</tissue>
    </source>
</reference>
<reference key="2">
    <citation type="journal article" date="1999" name="Biochim. Biophys. Acta">
        <title>Expression of novel homeobox genes in early embryogenesis in rice.</title>
        <authorList>
            <person name="Ito Y."/>
            <person name="Eiguchi M."/>
            <person name="Kurata N."/>
        </authorList>
    </citation>
    <scope>NUCLEOTIDE SEQUENCE [MRNA]</scope>
    <scope>DEVELOPMENTAL STAGE</scope>
    <source>
        <strain>cv. Nipponbare</strain>
        <tissue>Embryo</tissue>
    </source>
</reference>
<reference key="3">
    <citation type="journal article" date="2005" name="Nature">
        <title>The map-based sequence of the rice genome.</title>
        <authorList>
            <consortium name="International rice genome sequencing project (IRGSP)"/>
        </authorList>
    </citation>
    <scope>NUCLEOTIDE SEQUENCE [LARGE SCALE GENOMIC DNA]</scope>
    <source>
        <strain>cv. Nipponbare</strain>
    </source>
</reference>
<reference key="4">
    <citation type="journal article" date="2008" name="Nucleic Acids Res.">
        <title>The rice annotation project database (RAP-DB): 2008 update.</title>
        <authorList>
            <consortium name="The rice annotation project (RAP)"/>
        </authorList>
    </citation>
    <scope>GENOME REANNOTATION</scope>
    <source>
        <strain>cv. Nipponbare</strain>
    </source>
</reference>
<reference key="5">
    <citation type="journal article" date="2013" name="Rice">
        <title>Improvement of the Oryza sativa Nipponbare reference genome using next generation sequence and optical map data.</title>
        <authorList>
            <person name="Kawahara Y."/>
            <person name="de la Bastide M."/>
            <person name="Hamilton J.P."/>
            <person name="Kanamori H."/>
            <person name="McCombie W.R."/>
            <person name="Ouyang S."/>
            <person name="Schwartz D.C."/>
            <person name="Tanaka T."/>
            <person name="Wu J."/>
            <person name="Zhou S."/>
            <person name="Childs K.L."/>
            <person name="Davidson R.M."/>
            <person name="Lin H."/>
            <person name="Quesada-Ocampo L."/>
            <person name="Vaillancourt B."/>
            <person name="Sakai H."/>
            <person name="Lee S.S."/>
            <person name="Kim J."/>
            <person name="Numa H."/>
            <person name="Itoh T."/>
            <person name="Buell C.R."/>
            <person name="Matsumoto T."/>
        </authorList>
    </citation>
    <scope>GENOME REANNOTATION</scope>
    <source>
        <strain>cv. Nipponbare</strain>
    </source>
</reference>
<reference key="6">
    <citation type="journal article" date="1999" name="Plant Mol. Biol.">
        <title>Characterization of the KNOX class homeobox genes Oskn2 and Oskn3 identified in a collection of cDNA libraries covering the early stages of rice embryogenesis.</title>
        <authorList>
            <person name="Postma-Haarsma A.D."/>
            <person name="Verwoert I.I.G."/>
            <person name="Stronk O.P."/>
            <person name="Koster J."/>
            <person name="Lamers G.E.M."/>
            <person name="Hoge J.H."/>
            <person name="Meijer A.H."/>
        </authorList>
    </citation>
    <scope>FUNCTION</scope>
    <scope>DEVELOPMENTAL STAGE</scope>
</reference>
<reference key="7">
    <citation type="journal article" date="2008" name="FEBS J.">
        <title>Genome-wide identification, classification, evolutionary expansion and expression analyses of homeobox genes in rice.</title>
        <authorList>
            <person name="Jain M."/>
            <person name="Tyagi A.K."/>
            <person name="Khurana J.P."/>
        </authorList>
    </citation>
    <scope>GENE FAMILY</scope>
    <scope>NOMENCLATURE</scope>
</reference>
<accession>O80416</accession>
<accession>Q84ZI8</accession>
<accession>Q9SXM6</accession>
<sequence>MDQSFGNLGGGGGAGGSGKAAASSFLQLPLSTAAAATAYYGTPLALHQAAAAAGPSQYHGHGHPHHGGGHHHSKHGGAGGGEISAAEAESIKAKIMAHPQYSALLAAYLDCQKVGAPPEVLERLTATAAKLDARPPGRHDARDPELDQFMEAYCNMLAKYREELTRPIDEAMEFLKRVESQLDTIAGGAHGGGAGSARLLLADGKSECVGSSEDDMDPSGRENEPPEIDPRAEDKELKFQLLKKYSGYLSSLRQEFSKKKKKGKLPKEARQKLLHWWELHYKWPYPSETEKIALAESTGLDQKQINNWFINQRKRHWKPSEDMPFVMMEGFHPQNAAALYMDGPFMADGMYRLGS</sequence>
<keyword id="KW-0238">DNA-binding</keyword>
<keyword id="KW-0371">Homeobox</keyword>
<keyword id="KW-0539">Nucleus</keyword>
<keyword id="KW-1185">Reference proteome</keyword>
<feature type="chain" id="PRO_0000360015" description="Homeobox protein knotted-1-like 12">
    <location>
        <begin position="1"/>
        <end position="355"/>
    </location>
</feature>
<feature type="domain" description="ELK" evidence="2">
    <location>
        <begin position="236"/>
        <end position="256"/>
    </location>
</feature>
<feature type="DNA-binding region" description="Homeobox; TALE-type" evidence="1">
    <location>
        <begin position="257"/>
        <end position="320"/>
    </location>
</feature>
<feature type="region of interest" description="Disordered" evidence="3">
    <location>
        <begin position="52"/>
        <end position="82"/>
    </location>
</feature>
<feature type="region of interest" description="Disordered" evidence="3">
    <location>
        <begin position="207"/>
        <end position="233"/>
    </location>
</feature>
<feature type="compositionally biased region" description="Basic residues" evidence="3">
    <location>
        <begin position="60"/>
        <end position="75"/>
    </location>
</feature>
<feature type="compositionally biased region" description="Basic and acidic residues" evidence="3">
    <location>
        <begin position="218"/>
        <end position="233"/>
    </location>
</feature>
<feature type="sequence conflict" description="In Ref. 2; BAA77817." evidence="7" ref="2">
    <original>H</original>
    <variation>P</variation>
    <location>
        <position position="332"/>
    </location>
</feature>
<proteinExistence type="evidence at transcript level"/>
<comment type="function">
    <text evidence="4 6">Probable transcription factor that may be involved in shoot formation during embryogenesis.</text>
</comment>
<comment type="subcellular location">
    <subcellularLocation>
        <location evidence="1 2">Nucleus</location>
    </subcellularLocation>
</comment>
<comment type="tissue specificity">
    <text evidence="6">Expressed in stems, rachis and inflorescence.</text>
</comment>
<comment type="developmental stage">
    <text evidence="4 5 6">Expressed in the embryo at 4 days after pollination (DAP) in the ventral and basal part of the embryo, including the initial of the shoot apical meristem (SAM). At 5 DAP, expressed at the ventral side of the embryo, but the expression within SAM is down-regulated. At 7 DAP, expression is restricted to the boundaries between the embryonic organs, between the scutellum and the coleoptile, the coleoptile and the second leaf primordium, the shoot apical meristem and the first leaf primordium, the first leaf primordium and the coleoptile, the coleoptile and the epiblast and at the tip of the epiblast, but not in the leaf primordia.</text>
</comment>
<comment type="similarity">
    <text evidence="2">Belongs to the TALE/KNOX homeobox family.</text>
</comment>
<comment type="sequence caution" evidence="7">
    <conflict type="erroneous gene model prediction">
        <sequence resource="EMBL-CDS" id="BAC57683"/>
    </conflict>
</comment>
<dbReference type="EMBL" id="AB016071">
    <property type="protein sequence ID" value="BAA31688.1"/>
    <property type="molecule type" value="mRNA"/>
</dbReference>
<dbReference type="EMBL" id="AB007623">
    <property type="protein sequence ID" value="BAA77817.1"/>
    <property type="molecule type" value="mRNA"/>
</dbReference>
<dbReference type="EMBL" id="AP006172">
    <property type="protein sequence ID" value="BAC84729.1"/>
    <property type="molecule type" value="Genomic_DNA"/>
</dbReference>
<dbReference type="EMBL" id="AP004301">
    <property type="protein sequence ID" value="BAC57683.1"/>
    <property type="status" value="ALT_SEQ"/>
    <property type="molecule type" value="Genomic_DNA"/>
</dbReference>
<dbReference type="EMBL" id="AP014963">
    <property type="protein sequence ID" value="BAS99916.1"/>
    <property type="molecule type" value="Genomic_DNA"/>
</dbReference>
<dbReference type="EMBL" id="AP008213">
    <property type="protein sequence ID" value="BAF20732.1"/>
    <property type="molecule type" value="Genomic_DNA"/>
</dbReference>
<dbReference type="PIR" id="T02785">
    <property type="entry name" value="T02785"/>
</dbReference>
<dbReference type="RefSeq" id="XP_015646117.1">
    <property type="nucleotide sequence ID" value="XM_015790631.1"/>
</dbReference>
<dbReference type="SMR" id="O80416"/>
<dbReference type="FunCoup" id="O80416">
    <property type="interactions" value="253"/>
</dbReference>
<dbReference type="IntAct" id="O80416">
    <property type="interactions" value="1"/>
</dbReference>
<dbReference type="STRING" id="39947.O80416"/>
<dbReference type="PaxDb" id="39947-O80416"/>
<dbReference type="EnsemblPlants" id="Os07t0129700-01">
    <property type="protein sequence ID" value="Os07t0129700-01"/>
    <property type="gene ID" value="Os07g0129700"/>
</dbReference>
<dbReference type="Gramene" id="Os07t0129700-01">
    <property type="protein sequence ID" value="Os07t0129700-01"/>
    <property type="gene ID" value="Os07g0129700"/>
</dbReference>
<dbReference type="KEGG" id="dosa:Os07g0129700"/>
<dbReference type="eggNOG" id="KOG0773">
    <property type="taxonomic scope" value="Eukaryota"/>
</dbReference>
<dbReference type="HOGENOM" id="CLU_040111_0_0_1"/>
<dbReference type="InParanoid" id="O80416"/>
<dbReference type="OMA" id="LEAYINC"/>
<dbReference type="OrthoDB" id="10056939at2759"/>
<dbReference type="PlantReactome" id="R-OSA-9826782">
    <property type="pathway name" value="Regulation of seed germination and coleoptile growth under submergence and normal gravity environment"/>
</dbReference>
<dbReference type="Proteomes" id="UP000000763">
    <property type="component" value="Chromosome 7"/>
</dbReference>
<dbReference type="Proteomes" id="UP000059680">
    <property type="component" value="Chromosome 7"/>
</dbReference>
<dbReference type="ExpressionAtlas" id="O80416">
    <property type="expression patterns" value="baseline and differential"/>
</dbReference>
<dbReference type="GO" id="GO:0005634">
    <property type="term" value="C:nucleus"/>
    <property type="evidence" value="ECO:0000318"/>
    <property type="project" value="GO_Central"/>
</dbReference>
<dbReference type="GO" id="GO:0003677">
    <property type="term" value="F:DNA binding"/>
    <property type="evidence" value="ECO:0007669"/>
    <property type="project" value="UniProtKB-KW"/>
</dbReference>
<dbReference type="GO" id="GO:0000981">
    <property type="term" value="F:DNA-binding transcription factor activity, RNA polymerase II-specific"/>
    <property type="evidence" value="ECO:0007669"/>
    <property type="project" value="InterPro"/>
</dbReference>
<dbReference type="CDD" id="cd00086">
    <property type="entry name" value="homeodomain"/>
    <property type="match status" value="1"/>
</dbReference>
<dbReference type="FunFam" id="1.10.10.60:FF:000076">
    <property type="entry name" value="Homeobox protein knotted-1-like 2"/>
    <property type="match status" value="1"/>
</dbReference>
<dbReference type="Gene3D" id="1.10.10.60">
    <property type="entry name" value="Homeodomain-like"/>
    <property type="match status" value="1"/>
</dbReference>
<dbReference type="InterPro" id="IPR005539">
    <property type="entry name" value="ELK_dom"/>
</dbReference>
<dbReference type="InterPro" id="IPR001356">
    <property type="entry name" value="HD"/>
</dbReference>
<dbReference type="InterPro" id="IPR017970">
    <property type="entry name" value="Homeobox_CS"/>
</dbReference>
<dbReference type="InterPro" id="IPR009057">
    <property type="entry name" value="Homeodomain-like_sf"/>
</dbReference>
<dbReference type="InterPro" id="IPR008422">
    <property type="entry name" value="KN_HD"/>
</dbReference>
<dbReference type="InterPro" id="IPR005540">
    <property type="entry name" value="KNOX1"/>
</dbReference>
<dbReference type="InterPro" id="IPR005541">
    <property type="entry name" value="KNOX2"/>
</dbReference>
<dbReference type="InterPro" id="IPR050224">
    <property type="entry name" value="TALE_homeobox"/>
</dbReference>
<dbReference type="PANTHER" id="PTHR11850">
    <property type="entry name" value="HOMEOBOX PROTEIN TRANSCRIPTION FACTORS"/>
    <property type="match status" value="1"/>
</dbReference>
<dbReference type="Pfam" id="PF03789">
    <property type="entry name" value="ELK"/>
    <property type="match status" value="1"/>
</dbReference>
<dbReference type="Pfam" id="PF05920">
    <property type="entry name" value="Homeobox_KN"/>
    <property type="match status" value="1"/>
</dbReference>
<dbReference type="Pfam" id="PF03790">
    <property type="entry name" value="KNOX1"/>
    <property type="match status" value="1"/>
</dbReference>
<dbReference type="Pfam" id="PF03791">
    <property type="entry name" value="KNOX2"/>
    <property type="match status" value="1"/>
</dbReference>
<dbReference type="SMART" id="SM01188">
    <property type="entry name" value="ELK"/>
    <property type="match status" value="1"/>
</dbReference>
<dbReference type="SMART" id="SM00389">
    <property type="entry name" value="HOX"/>
    <property type="match status" value="1"/>
</dbReference>
<dbReference type="SMART" id="SM01255">
    <property type="entry name" value="KNOX1"/>
    <property type="match status" value="1"/>
</dbReference>
<dbReference type="SMART" id="SM01256">
    <property type="entry name" value="KNOX2"/>
    <property type="match status" value="1"/>
</dbReference>
<dbReference type="SUPFAM" id="SSF46689">
    <property type="entry name" value="Homeodomain-like"/>
    <property type="match status" value="1"/>
</dbReference>
<dbReference type="PROSITE" id="PS51213">
    <property type="entry name" value="ELK"/>
    <property type="match status" value="1"/>
</dbReference>
<dbReference type="PROSITE" id="PS00027">
    <property type="entry name" value="HOMEOBOX_1"/>
    <property type="match status" value="1"/>
</dbReference>
<dbReference type="PROSITE" id="PS50071">
    <property type="entry name" value="HOMEOBOX_2"/>
    <property type="match status" value="1"/>
</dbReference>
<name>KNOSC_ORYSJ</name>
<evidence type="ECO:0000255" key="1">
    <source>
        <dbReference type="PROSITE-ProRule" id="PRU00108"/>
    </source>
</evidence>
<evidence type="ECO:0000255" key="2">
    <source>
        <dbReference type="PROSITE-ProRule" id="PRU00559"/>
    </source>
</evidence>
<evidence type="ECO:0000256" key="3">
    <source>
        <dbReference type="SAM" id="MobiDB-lite"/>
    </source>
</evidence>
<evidence type="ECO:0000269" key="4">
    <source>
    </source>
</evidence>
<evidence type="ECO:0000269" key="5">
    <source>
    </source>
</evidence>
<evidence type="ECO:0000269" key="6">
    <source>
    </source>
</evidence>
<evidence type="ECO:0000305" key="7"/>
<organism>
    <name type="scientific">Oryza sativa subsp. japonica</name>
    <name type="common">Rice</name>
    <dbReference type="NCBI Taxonomy" id="39947"/>
    <lineage>
        <taxon>Eukaryota</taxon>
        <taxon>Viridiplantae</taxon>
        <taxon>Streptophyta</taxon>
        <taxon>Embryophyta</taxon>
        <taxon>Tracheophyta</taxon>
        <taxon>Spermatophyta</taxon>
        <taxon>Magnoliopsida</taxon>
        <taxon>Liliopsida</taxon>
        <taxon>Poales</taxon>
        <taxon>Poaceae</taxon>
        <taxon>BOP clade</taxon>
        <taxon>Oryzoideae</taxon>
        <taxon>Oryzeae</taxon>
        <taxon>Oryzinae</taxon>
        <taxon>Oryza</taxon>
        <taxon>Oryza sativa</taxon>
    </lineage>
</organism>
<protein>
    <recommendedName>
        <fullName>Homeobox protein knotted-1-like 12</fullName>
    </recommendedName>
    <alternativeName>
        <fullName>Homeobox protein HOS3</fullName>
    </alternativeName>
    <alternativeName>
        <fullName>Homeobox protein OSH15</fullName>
    </alternativeName>
    <alternativeName>
        <fullName>Homeobox protein knotted-1-like 3</fullName>
        <shortName>Oskn3</shortName>
    </alternativeName>
</protein>